<sequence>MARPSLSPSNPLGFTPWPVTVITAVVYLALVVPLLVVHHVVPSAPSSSPKGLNLTEAWADLQELTHGFHPYNSHRNDEVHEWLLKRILELIDSAPPASEYGSVGEEKPDIVVFDDTQSNLTFSGRGSGLGVYFESTNIMVYIRGWEEDRERWWEDPHGRPAGKGGVLVNAHYDSVSTGYGATDDGVGVVSCLQLIKYFTTPGHVPRRGLVLLFNNGEEDFLNGARVYSQHPISQLPHTFLNLEGAGAGGRATLFRSSDAEVTKPYMRAPHPFGSVLSANGFEAGLISSQTDYVVFEGDLGLRGLDVAFMEPRARYHTDEDDARHTSLASVWHMLSAAVATTEGLVSDASSRFEGLPREDGRIASGSGPKGVWFDLFGSAFVVFELHTLFALSVTLLVVAPLVLLVTSIALARADKMYLFRSSASPEDSDGSEVVPLHGVRGFFRFPFLLVIPTAVTVGLAYLVTKFNPYIIHSSEYAVWSMMISAWVFLAWFVSRVADFARPSAFHRVYTLTWLFLVEWVFLVISTVYENQYGLAGGYFVLFVFAGTFLATWISYLELFALPRKSDYATQLALPSRRTSSHGSRLGTASGEDVEDGEDEDDDGTTAEATETTSLLRGQRTTFANYVRVTGDYLRDDDEEPRQPNLYGHEQAWSIHLPKWVWVLQFLLTAPLVLIFVGPLALLLTSALRQTGQDGSPSLFIYIAVAALTTLLFIPLLPFIHRYTHHIPLFLLCVFAGTLIYNLVAFPFSPANRLKLFFIQEVDLDTGVNHASLSGAYPFVHDVARRLPSTAGQNITCDLAMLRPKCSWHGIPPQVVQPAAASKMEDWLSYNITKSDSEPKAQLSISGRNTRACKVVFDRPVLDFQVADSAYDPRFPHVSPDGTKEIRLWSREWGHTWTVDVEWAADAEETDEKGPGLSGRVVCLWSDGNSAGVIPALDEVRRYAPVWAGVSKLSDGLVEGSRRFEV</sequence>
<organism>
    <name type="scientific">Aspergillus fumigatus (strain ATCC MYA-4609 / CBS 101355 / FGSC A1100 / Af293)</name>
    <name type="common">Neosartorya fumigata</name>
    <dbReference type="NCBI Taxonomy" id="330879"/>
    <lineage>
        <taxon>Eukaryota</taxon>
        <taxon>Fungi</taxon>
        <taxon>Dikarya</taxon>
        <taxon>Ascomycota</taxon>
        <taxon>Pezizomycotina</taxon>
        <taxon>Eurotiomycetes</taxon>
        <taxon>Eurotiomycetidae</taxon>
        <taxon>Eurotiales</taxon>
        <taxon>Aspergillaceae</taxon>
        <taxon>Aspergillus</taxon>
        <taxon>Aspergillus subgen. Fumigati</taxon>
    </lineage>
</organism>
<evidence type="ECO:0000250" key="1">
    <source>
        <dbReference type="UniProtKB" id="P38244"/>
    </source>
</evidence>
<evidence type="ECO:0000250" key="2">
    <source>
        <dbReference type="UniProtKB" id="P80561"/>
    </source>
</evidence>
<evidence type="ECO:0000255" key="3"/>
<evidence type="ECO:0000255" key="4">
    <source>
        <dbReference type="PROSITE-ProRule" id="PRU00498"/>
    </source>
</evidence>
<evidence type="ECO:0000256" key="5">
    <source>
        <dbReference type="SAM" id="MobiDB-lite"/>
    </source>
</evidence>
<evidence type="ECO:0000305" key="6"/>
<feature type="chain" id="PRO_0000411701" description="Vacuolar membrane protease">
    <location>
        <begin position="1"/>
        <end position="965"/>
    </location>
</feature>
<feature type="topological domain" description="Cytoplasmic" evidence="1">
    <location>
        <begin position="1"/>
        <end position="16"/>
    </location>
</feature>
<feature type="transmembrane region" description="Helical; Name=1" evidence="3">
    <location>
        <begin position="17"/>
        <end position="37"/>
    </location>
</feature>
<feature type="topological domain" description="Vacuolar" evidence="1">
    <location>
        <begin position="38"/>
        <end position="387"/>
    </location>
</feature>
<feature type="transmembrane region" description="Helical; Name=2" evidence="3">
    <location>
        <begin position="388"/>
        <end position="408"/>
    </location>
</feature>
<feature type="topological domain" description="Cytoplasmic" evidence="1">
    <location>
        <begin position="409"/>
        <end position="441"/>
    </location>
</feature>
<feature type="transmembrane region" description="Helical; Name=3" evidence="3">
    <location>
        <begin position="442"/>
        <end position="462"/>
    </location>
</feature>
<feature type="topological domain" description="Vacuolar" evidence="1">
    <location>
        <begin position="463"/>
        <end position="472"/>
    </location>
</feature>
<feature type="transmembrane region" description="Helical; Name=4" evidence="3">
    <location>
        <begin position="473"/>
        <end position="493"/>
    </location>
</feature>
<feature type="topological domain" description="Cytoplasmic" evidence="1">
    <location>
        <begin position="494"/>
        <end position="507"/>
    </location>
</feature>
<feature type="transmembrane region" description="Helical; Name=5" evidence="3">
    <location>
        <begin position="508"/>
        <end position="528"/>
    </location>
</feature>
<feature type="topological domain" description="Vacuolar" evidence="1">
    <location>
        <begin position="529"/>
        <end position="532"/>
    </location>
</feature>
<feature type="transmembrane region" description="Helical; Name=6" evidence="3">
    <location>
        <begin position="533"/>
        <end position="553"/>
    </location>
</feature>
<feature type="topological domain" description="Cytoplasmic" evidence="1">
    <location>
        <begin position="554"/>
        <end position="661"/>
    </location>
</feature>
<feature type="transmembrane region" description="Helical; Name=7" evidence="3">
    <location>
        <begin position="662"/>
        <end position="682"/>
    </location>
</feature>
<feature type="topological domain" description="Vacuolar" evidence="1">
    <location>
        <begin position="683"/>
        <end position="698"/>
    </location>
</feature>
<feature type="transmembrane region" description="Helical; Name=8" evidence="3">
    <location>
        <begin position="699"/>
        <end position="719"/>
    </location>
</feature>
<feature type="topological domain" description="Cytoplasmic" evidence="1">
    <location>
        <begin position="720"/>
        <end position="725"/>
    </location>
</feature>
<feature type="transmembrane region" description="Helical; Name=9" evidence="3">
    <location>
        <begin position="726"/>
        <end position="746"/>
    </location>
</feature>
<feature type="topological domain" description="Vacuolar" evidence="1">
    <location>
        <begin position="747"/>
        <end position="965"/>
    </location>
</feature>
<feature type="region of interest" description="Disordered" evidence="5">
    <location>
        <begin position="577"/>
        <end position="610"/>
    </location>
</feature>
<feature type="compositionally biased region" description="Acidic residues" evidence="5">
    <location>
        <begin position="591"/>
        <end position="604"/>
    </location>
</feature>
<feature type="active site" description="Proton acceptor" evidence="2">
    <location>
        <position position="217"/>
    </location>
</feature>
<feature type="binding site" evidence="2">
    <location>
        <position position="171"/>
    </location>
    <ligand>
        <name>Zn(2+)</name>
        <dbReference type="ChEBI" id="CHEBI:29105"/>
        <label>1</label>
        <note>catalytic</note>
    </ligand>
</feature>
<feature type="binding site" evidence="2">
    <location>
        <position position="183"/>
    </location>
    <ligand>
        <name>Zn(2+)</name>
        <dbReference type="ChEBI" id="CHEBI:29105"/>
        <label>1</label>
        <note>catalytic</note>
    </ligand>
</feature>
<feature type="binding site" evidence="2">
    <location>
        <position position="183"/>
    </location>
    <ligand>
        <name>Zn(2+)</name>
        <dbReference type="ChEBI" id="CHEBI:29105"/>
        <label>2</label>
        <note>catalytic</note>
    </ligand>
</feature>
<feature type="binding site" evidence="2">
    <location>
        <position position="218"/>
    </location>
    <ligand>
        <name>Zn(2+)</name>
        <dbReference type="ChEBI" id="CHEBI:29105"/>
        <label>2</label>
        <note>catalytic</note>
    </ligand>
</feature>
<feature type="binding site" evidence="2">
    <location>
        <position position="243"/>
    </location>
    <ligand>
        <name>Zn(2+)</name>
        <dbReference type="ChEBI" id="CHEBI:29105"/>
        <label>1</label>
        <note>catalytic</note>
    </ligand>
</feature>
<feature type="binding site" evidence="2">
    <location>
        <position position="316"/>
    </location>
    <ligand>
        <name>Zn(2+)</name>
        <dbReference type="ChEBI" id="CHEBI:29105"/>
        <label>2</label>
        <note>catalytic</note>
    </ligand>
</feature>
<feature type="site" description="Transition state stabilizer" evidence="2">
    <location>
        <position position="315"/>
    </location>
</feature>
<feature type="glycosylation site" description="N-linked (GlcNAc...) asparagine" evidence="4">
    <location>
        <position position="53"/>
    </location>
</feature>
<feature type="glycosylation site" description="N-linked (GlcNAc...) asparagine" evidence="4">
    <location>
        <position position="119"/>
    </location>
</feature>
<feature type="glycosylation site" description="N-linked (GlcNAc...) asparagine" evidence="4">
    <location>
        <position position="793"/>
    </location>
</feature>
<feature type="glycosylation site" description="N-linked (GlcNAc...) asparagine" evidence="4">
    <location>
        <position position="830"/>
    </location>
</feature>
<comment type="function">
    <text evidence="1">May be involved in vacuolar sorting and osmoregulation.</text>
</comment>
<comment type="cofactor">
    <cofactor evidence="2">
        <name>Zn(2+)</name>
        <dbReference type="ChEBI" id="CHEBI:29105"/>
    </cofactor>
    <text evidence="2">Binds 2 Zn(2+) ions per subunit.</text>
</comment>
<comment type="subcellular location">
    <subcellularLocation>
        <location evidence="1">Vacuole membrane</location>
        <topology evidence="3">Multi-pass membrane protein</topology>
    </subcellularLocation>
</comment>
<comment type="similarity">
    <text evidence="6">Belongs to the peptidase M28 family.</text>
</comment>
<accession>Q4WJH4</accession>
<proteinExistence type="inferred from homology"/>
<keyword id="KW-0325">Glycoprotein</keyword>
<keyword id="KW-0378">Hydrolase</keyword>
<keyword id="KW-0472">Membrane</keyword>
<keyword id="KW-0479">Metal-binding</keyword>
<keyword id="KW-0482">Metalloprotease</keyword>
<keyword id="KW-0645">Protease</keyword>
<keyword id="KW-1185">Reference proteome</keyword>
<keyword id="KW-0812">Transmembrane</keyword>
<keyword id="KW-1133">Transmembrane helix</keyword>
<keyword id="KW-0926">Vacuole</keyword>
<keyword id="KW-0862">Zinc</keyword>
<reference key="1">
    <citation type="journal article" date="2005" name="Nature">
        <title>Genomic sequence of the pathogenic and allergenic filamentous fungus Aspergillus fumigatus.</title>
        <authorList>
            <person name="Nierman W.C."/>
            <person name="Pain A."/>
            <person name="Anderson M.J."/>
            <person name="Wortman J.R."/>
            <person name="Kim H.S."/>
            <person name="Arroyo J."/>
            <person name="Berriman M."/>
            <person name="Abe K."/>
            <person name="Archer D.B."/>
            <person name="Bermejo C."/>
            <person name="Bennett J.W."/>
            <person name="Bowyer P."/>
            <person name="Chen D."/>
            <person name="Collins M."/>
            <person name="Coulsen R."/>
            <person name="Davies R."/>
            <person name="Dyer P.S."/>
            <person name="Farman M.L."/>
            <person name="Fedorova N."/>
            <person name="Fedorova N.D."/>
            <person name="Feldblyum T.V."/>
            <person name="Fischer R."/>
            <person name="Fosker N."/>
            <person name="Fraser A."/>
            <person name="Garcia J.L."/>
            <person name="Garcia M.J."/>
            <person name="Goble A."/>
            <person name="Goldman G.H."/>
            <person name="Gomi K."/>
            <person name="Griffith-Jones S."/>
            <person name="Gwilliam R."/>
            <person name="Haas B.J."/>
            <person name="Haas H."/>
            <person name="Harris D.E."/>
            <person name="Horiuchi H."/>
            <person name="Huang J."/>
            <person name="Humphray S."/>
            <person name="Jimenez J."/>
            <person name="Keller N."/>
            <person name="Khouri H."/>
            <person name="Kitamoto K."/>
            <person name="Kobayashi T."/>
            <person name="Konzack S."/>
            <person name="Kulkarni R."/>
            <person name="Kumagai T."/>
            <person name="Lafton A."/>
            <person name="Latge J.-P."/>
            <person name="Li W."/>
            <person name="Lord A."/>
            <person name="Lu C."/>
            <person name="Majoros W.H."/>
            <person name="May G.S."/>
            <person name="Miller B.L."/>
            <person name="Mohamoud Y."/>
            <person name="Molina M."/>
            <person name="Monod M."/>
            <person name="Mouyna I."/>
            <person name="Mulligan S."/>
            <person name="Murphy L.D."/>
            <person name="O'Neil S."/>
            <person name="Paulsen I."/>
            <person name="Penalva M.A."/>
            <person name="Pertea M."/>
            <person name="Price C."/>
            <person name="Pritchard B.L."/>
            <person name="Quail M.A."/>
            <person name="Rabbinowitsch E."/>
            <person name="Rawlins N."/>
            <person name="Rajandream M.A."/>
            <person name="Reichard U."/>
            <person name="Renauld H."/>
            <person name="Robson G.D."/>
            <person name="Rodriguez de Cordoba S."/>
            <person name="Rodriguez-Pena J.M."/>
            <person name="Ronning C.M."/>
            <person name="Rutter S."/>
            <person name="Salzberg S.L."/>
            <person name="Sanchez M."/>
            <person name="Sanchez-Ferrero J.C."/>
            <person name="Saunders D."/>
            <person name="Seeger K."/>
            <person name="Squares R."/>
            <person name="Squares S."/>
            <person name="Takeuchi M."/>
            <person name="Tekaia F."/>
            <person name="Turner G."/>
            <person name="Vazquez de Aldana C.R."/>
            <person name="Weidman J."/>
            <person name="White O."/>
            <person name="Woodward J.R."/>
            <person name="Yu J.-H."/>
            <person name="Fraser C.M."/>
            <person name="Galagan J.E."/>
            <person name="Asai K."/>
            <person name="Machida M."/>
            <person name="Hall N."/>
            <person name="Barrell B.G."/>
            <person name="Denning D.W."/>
        </authorList>
    </citation>
    <scope>NUCLEOTIDE SEQUENCE [LARGE SCALE GENOMIC DNA]</scope>
    <source>
        <strain>ATCC MYA-4609 / CBS 101355 / FGSC A1100 / Af293</strain>
    </source>
</reference>
<protein>
    <recommendedName>
        <fullName evidence="1">Vacuolar membrane protease</fullName>
        <ecNumber evidence="6">3.4.-.-</ecNumber>
    </recommendedName>
    <alternativeName>
        <fullName evidence="1">FXNA-related family protease 1</fullName>
    </alternativeName>
</protein>
<name>PFF1_ASPFU</name>
<gene>
    <name type="ORF">AFUA_1G05960</name>
</gene>
<dbReference type="EC" id="3.4.-.-" evidence="6"/>
<dbReference type="EMBL" id="AAHF01000007">
    <property type="protein sequence ID" value="EAL88308.1"/>
    <property type="molecule type" value="Genomic_DNA"/>
</dbReference>
<dbReference type="RefSeq" id="XP_750346.1">
    <property type="nucleotide sequence ID" value="XM_745253.1"/>
</dbReference>
<dbReference type="SMR" id="Q4WJH4"/>
<dbReference type="FunCoup" id="Q4WJH4">
    <property type="interactions" value="5"/>
</dbReference>
<dbReference type="STRING" id="330879.Q4WJH4"/>
<dbReference type="EnsemblFungi" id="EAL88308">
    <property type="protein sequence ID" value="EAL88308"/>
    <property type="gene ID" value="AFUA_1G05960"/>
</dbReference>
<dbReference type="GeneID" id="3507605"/>
<dbReference type="KEGG" id="afm:AFUA_1G05960"/>
<dbReference type="VEuPathDB" id="FungiDB:Afu1g05960"/>
<dbReference type="eggNOG" id="KOG2194">
    <property type="taxonomic scope" value="Eukaryota"/>
</dbReference>
<dbReference type="HOGENOM" id="CLU_006412_1_0_1"/>
<dbReference type="InParanoid" id="Q4WJH4"/>
<dbReference type="OMA" id="TPWPVTI"/>
<dbReference type="OrthoDB" id="10257471at2759"/>
<dbReference type="Proteomes" id="UP000002530">
    <property type="component" value="Chromosome 1"/>
</dbReference>
<dbReference type="GO" id="GO:0005774">
    <property type="term" value="C:vacuolar membrane"/>
    <property type="evidence" value="ECO:0007669"/>
    <property type="project" value="UniProtKB-SubCell"/>
</dbReference>
<dbReference type="GO" id="GO:0046872">
    <property type="term" value="F:metal ion binding"/>
    <property type="evidence" value="ECO:0007669"/>
    <property type="project" value="UniProtKB-KW"/>
</dbReference>
<dbReference type="GO" id="GO:0008235">
    <property type="term" value="F:metalloexopeptidase activity"/>
    <property type="evidence" value="ECO:0007669"/>
    <property type="project" value="InterPro"/>
</dbReference>
<dbReference type="GO" id="GO:0006508">
    <property type="term" value="P:proteolysis"/>
    <property type="evidence" value="ECO:0000318"/>
    <property type="project" value="GO_Central"/>
</dbReference>
<dbReference type="CDD" id="cd03875">
    <property type="entry name" value="M28_Fxna_like"/>
    <property type="match status" value="1"/>
</dbReference>
<dbReference type="FunFam" id="3.40.630.10:FF:000057">
    <property type="entry name" value="Vacuolar membrane protease"/>
    <property type="match status" value="1"/>
</dbReference>
<dbReference type="Gene3D" id="3.40.630.10">
    <property type="entry name" value="Zn peptidases"/>
    <property type="match status" value="1"/>
</dbReference>
<dbReference type="InterPro" id="IPR048024">
    <property type="entry name" value="Fxna-like_M28_dom"/>
</dbReference>
<dbReference type="InterPro" id="IPR045175">
    <property type="entry name" value="M28_fam"/>
</dbReference>
<dbReference type="InterPro" id="IPR007484">
    <property type="entry name" value="Peptidase_M28"/>
</dbReference>
<dbReference type="InterPro" id="IPR053975">
    <property type="entry name" value="PFF1_C"/>
</dbReference>
<dbReference type="InterPro" id="IPR053976">
    <property type="entry name" value="PFF1_TM"/>
</dbReference>
<dbReference type="PANTHER" id="PTHR12147">
    <property type="entry name" value="METALLOPEPTIDASE M28 FAMILY MEMBER"/>
    <property type="match status" value="1"/>
</dbReference>
<dbReference type="PANTHER" id="PTHR12147:SF58">
    <property type="entry name" value="VACUOLAR MEMBRANE PROTEASE"/>
    <property type="match status" value="1"/>
</dbReference>
<dbReference type="Pfam" id="PF04389">
    <property type="entry name" value="Peptidase_M28"/>
    <property type="match status" value="1"/>
</dbReference>
<dbReference type="Pfam" id="PF22250">
    <property type="entry name" value="PFF1_C"/>
    <property type="match status" value="1"/>
</dbReference>
<dbReference type="Pfam" id="PF22251">
    <property type="entry name" value="PFF1_TM"/>
    <property type="match status" value="1"/>
</dbReference>
<dbReference type="SUPFAM" id="SSF53187">
    <property type="entry name" value="Zn-dependent exopeptidases"/>
    <property type="match status" value="1"/>
</dbReference>